<feature type="chain" id="PRO_0000441916" description="Transmembrane channel-like protein 2-B">
    <location>
        <begin position="1"/>
        <end position="892"/>
    </location>
</feature>
<feature type="transmembrane region" description="Helical" evidence="1">
    <location>
        <begin position="235"/>
        <end position="255"/>
    </location>
</feature>
<feature type="transmembrane region" description="Helical" evidence="2">
    <location>
        <begin position="275"/>
        <end position="295"/>
    </location>
</feature>
<feature type="transmembrane region" description="Helical" evidence="1">
    <location>
        <begin position="308"/>
        <end position="328"/>
    </location>
</feature>
<feature type="transmembrane region" description="Helical" evidence="1">
    <location>
        <begin position="403"/>
        <end position="423"/>
    </location>
</feature>
<feature type="transmembrane region" description="Helical" evidence="1">
    <location>
        <begin position="444"/>
        <end position="464"/>
    </location>
</feature>
<feature type="transmembrane region" description="Helical" evidence="1">
    <location>
        <begin position="482"/>
        <end position="502"/>
    </location>
</feature>
<feature type="transmembrane region" description="Helical" evidence="1">
    <location>
        <begin position="616"/>
        <end position="636"/>
    </location>
</feature>
<feature type="transmembrane region" description="Helical" evidence="1">
    <location>
        <begin position="671"/>
        <end position="691"/>
    </location>
</feature>
<feature type="transmembrane region" description="Helical" evidence="1">
    <location>
        <begin position="736"/>
        <end position="756"/>
    </location>
</feature>
<feature type="region of interest" description="Disordered" evidence="3">
    <location>
        <begin position="29"/>
        <end position="125"/>
    </location>
</feature>
<feature type="region of interest" description="Disordered" evidence="3">
    <location>
        <begin position="772"/>
        <end position="791"/>
    </location>
</feature>
<feature type="region of interest" description="Disordered" evidence="3">
    <location>
        <begin position="796"/>
        <end position="892"/>
    </location>
</feature>
<feature type="compositionally biased region" description="Basic residues" evidence="3">
    <location>
        <begin position="48"/>
        <end position="58"/>
    </location>
</feature>
<feature type="compositionally biased region" description="Basic residues" evidence="3">
    <location>
        <begin position="66"/>
        <end position="77"/>
    </location>
</feature>
<feature type="compositionally biased region" description="Low complexity" evidence="3">
    <location>
        <begin position="103"/>
        <end position="112"/>
    </location>
</feature>
<feature type="compositionally biased region" description="Basic and acidic residues" evidence="3">
    <location>
        <begin position="772"/>
        <end position="785"/>
    </location>
</feature>
<feature type="compositionally biased region" description="Pro residues" evidence="3">
    <location>
        <begin position="862"/>
        <end position="878"/>
    </location>
</feature>
<feature type="sequence conflict" description="In Ref. 2; BX296526." evidence="7" ref="2">
    <location>
        <position position="747"/>
    </location>
</feature>
<comment type="function">
    <text evidence="7">Probable component of the mechanotransducer (MET) non-selective cation channel.</text>
</comment>
<comment type="subcellular location">
    <subcellularLocation>
        <location evidence="2">Membrane</location>
        <topology evidence="2">Multi-pass membrane protein</topology>
    </subcellularLocation>
    <text evidence="5">Localized to the hair bundles of the hair cells.</text>
</comment>
<comment type="tissue specificity">
    <text evidence="4">In adults, expression is restricted to the hair cells of inner ear and lateral line organ. Expressed at higher levels in the larval lateral-line neuromasts than in the larval inner ear.</text>
</comment>
<comment type="similarity">
    <text evidence="2">Belongs to the TMC family.</text>
</comment>
<keyword id="KW-0472">Membrane</keyword>
<keyword id="KW-1185">Reference proteome</keyword>
<keyword id="KW-0812">Transmembrane</keyword>
<keyword id="KW-1133">Transmembrane helix</keyword>
<proteinExistence type="evidence at transcript level"/>
<protein>
    <recommendedName>
        <fullName evidence="6">Transmembrane channel-like protein 2-B</fullName>
    </recommendedName>
</protein>
<name>TMC2B_DANRE</name>
<evidence type="ECO:0000255" key="1"/>
<evidence type="ECO:0000255" key="2">
    <source>
        <dbReference type="RuleBase" id="RU310713"/>
    </source>
</evidence>
<evidence type="ECO:0000256" key="3">
    <source>
        <dbReference type="SAM" id="MobiDB-lite"/>
    </source>
</evidence>
<evidence type="ECO:0000269" key="4">
    <source>
    </source>
</evidence>
<evidence type="ECO:0000269" key="5">
    <source>
    </source>
</evidence>
<evidence type="ECO:0000303" key="6">
    <source>
    </source>
</evidence>
<evidence type="ECO:0000305" key="7"/>
<accession>F1QZE9</accession>
<accession>A0A076V6D3</accession>
<accession>F1QW55</accession>
<gene>
    <name evidence="6" type="primary">tmc2b</name>
    <name type="synonym">si:229d2.2</name>
</gene>
<sequence>MCVLQLGWKWMQNLIVEVMWTQKEEQKAGINQNLRREEGKPNQQTVWRRAKKRRMNRRARGEAGGRSKKMRMRVRKNRREEERKLSIPGREQQRKTSQRRRSPSSCSSSSDNNSDDESMSEGEMARLKEEVEEKKKLIATLRNKPWRMKRRLKCLKEAQEFVEKFEGALGKGKGRRLYAFKVMMTKKLIKFNRDFENFKTACIPWESRIKEVESHFGSSVASYFIFLRWMYGLNLVLFGFMFGLVVIPELLMGIPYGSIPRKTVPREEQDSAMDFSVLFEFGGYCKYSILFYGFYNNQRTIGFLQFRLPLSYLLVGVGIFGYSLMVVIRTMARNANEGGDGGDEGNFTFCWKLFTSWDYLIGNPETADNKFASTTTSFKESIVDEQENLKDENIHLRRFLRLLANVLILCCLAGSGYLIYAVVKRSQDFAKRDRNELTWLQKNEVEIVMSLLGLVCPPLFEAIAELEDYHPRIALKWQLGRIFALFLGNLYTFLFALFDEVNGKLENEKQIKNQTVWALKEYYANYTLQYNITENIPPPNIAPADVIRGPCWETEVGIEFVKLTVSDIQVTYLTILIGDFLRALIVRFLNYCWCWDLEAGFPSYAEFDISGNVLGLIFNQGMIWMGAFYAPGLVGINVLRLLSSMYYQCWAVMACNVPHERVFKASRSNNFYMGLLLLVLFLSLMPVIYSIMTLPPSFDCGPFSGKDKMYDVITETIDKDLPPFMADIFSYASNPGLIISVVLLMVWLAIYYLNAVSKAYQNSNLELKRKMQMQRDEEKNRRNNKDSTNQVMKDLEDLLPNKSLIPPPSVEETEKPAEQPSKSSKVTGKPGAAASGKGVHVQKDVSLAAANPRAPVTRAPGPRQPGPLPGNPRGPPPGQGMGRGRGGPPPRR</sequence>
<dbReference type="EMBL" id="BX296526">
    <property type="status" value="NOT_ANNOTATED_CDS"/>
    <property type="molecule type" value="Genomic_DNA"/>
</dbReference>
<dbReference type="EMBL" id="KM115408">
    <property type="protein sequence ID" value="AIK19897.1"/>
    <property type="molecule type" value="mRNA"/>
</dbReference>
<dbReference type="RefSeq" id="NP_001289152.1">
    <property type="nucleotide sequence ID" value="NM_001302223.1"/>
</dbReference>
<dbReference type="SMR" id="F1QZE9"/>
<dbReference type="FunCoup" id="F1QZE9">
    <property type="interactions" value="449"/>
</dbReference>
<dbReference type="STRING" id="7955.ENSDARP00000044470"/>
<dbReference type="TCDB" id="1.A.17.4.13">
    <property type="family name" value="the calcium-dependent chloride channel (ca-clc) family"/>
</dbReference>
<dbReference type="PaxDb" id="7955-ENSDARP00000044470"/>
<dbReference type="GeneID" id="567304"/>
<dbReference type="KEGG" id="dre:567304"/>
<dbReference type="AGR" id="ZFIN:ZDB-GENE-060526-262"/>
<dbReference type="CTD" id="567304"/>
<dbReference type="ZFIN" id="ZDB-GENE-060526-262">
    <property type="gene designation" value="tmc2b"/>
</dbReference>
<dbReference type="eggNOG" id="ENOG502QVCF">
    <property type="taxonomic scope" value="Eukaryota"/>
</dbReference>
<dbReference type="InParanoid" id="F1QZE9"/>
<dbReference type="OrthoDB" id="5831905at2759"/>
<dbReference type="TreeFam" id="TF313462"/>
<dbReference type="PRO" id="PR:F1QZE9"/>
<dbReference type="Proteomes" id="UP000000437">
    <property type="component" value="Chromosome 5"/>
</dbReference>
<dbReference type="GO" id="GO:0005886">
    <property type="term" value="C:plasma membrane"/>
    <property type="evidence" value="ECO:0007669"/>
    <property type="project" value="InterPro"/>
</dbReference>
<dbReference type="GO" id="GO:0008381">
    <property type="term" value="F:mechanosensitive monoatomic ion channel activity"/>
    <property type="evidence" value="ECO:0000318"/>
    <property type="project" value="GO_Central"/>
</dbReference>
<dbReference type="GO" id="GO:0050910">
    <property type="term" value="P:detection of mechanical stimulus involved in sensory perception of sound"/>
    <property type="evidence" value="ECO:0000315"/>
    <property type="project" value="ZFIN"/>
</dbReference>
<dbReference type="GO" id="GO:0048839">
    <property type="term" value="P:inner ear development"/>
    <property type="evidence" value="ECO:0000270"/>
    <property type="project" value="UniProtKB"/>
</dbReference>
<dbReference type="GO" id="GO:0042472">
    <property type="term" value="P:inner ear morphogenesis"/>
    <property type="evidence" value="ECO:0000270"/>
    <property type="project" value="UniProtKB"/>
</dbReference>
<dbReference type="GO" id="GO:0048884">
    <property type="term" value="P:neuromast development"/>
    <property type="evidence" value="ECO:0000270"/>
    <property type="project" value="UniProtKB"/>
</dbReference>
<dbReference type="GO" id="GO:0060005">
    <property type="term" value="P:vestibular reflex"/>
    <property type="evidence" value="ECO:0000318"/>
    <property type="project" value="GO_Central"/>
</dbReference>
<dbReference type="InterPro" id="IPR038900">
    <property type="entry name" value="TMC"/>
</dbReference>
<dbReference type="InterPro" id="IPR012496">
    <property type="entry name" value="TMC_dom"/>
</dbReference>
<dbReference type="PANTHER" id="PTHR23302:SF62">
    <property type="entry name" value="TRANSMEMBRANE CHANNEL-LIKE PROTEIN 2-B"/>
    <property type="match status" value="1"/>
</dbReference>
<dbReference type="PANTHER" id="PTHR23302">
    <property type="entry name" value="TRANSMEMBRANE CHANNEL-RELATED"/>
    <property type="match status" value="1"/>
</dbReference>
<dbReference type="Pfam" id="PF07810">
    <property type="entry name" value="TMC"/>
    <property type="match status" value="1"/>
</dbReference>
<organism>
    <name type="scientific">Danio rerio</name>
    <name type="common">Zebrafish</name>
    <name type="synonym">Brachydanio rerio</name>
    <dbReference type="NCBI Taxonomy" id="7955"/>
    <lineage>
        <taxon>Eukaryota</taxon>
        <taxon>Metazoa</taxon>
        <taxon>Chordata</taxon>
        <taxon>Craniata</taxon>
        <taxon>Vertebrata</taxon>
        <taxon>Euteleostomi</taxon>
        <taxon>Actinopterygii</taxon>
        <taxon>Neopterygii</taxon>
        <taxon>Teleostei</taxon>
        <taxon>Ostariophysi</taxon>
        <taxon>Cypriniformes</taxon>
        <taxon>Danionidae</taxon>
        <taxon>Danioninae</taxon>
        <taxon>Danio</taxon>
    </lineage>
</organism>
<reference key="1">
    <citation type="journal article" date="2014" name="Proc. Natl. Acad. Sci. U.S.A.">
        <title>Tip-link protein protocadherin 15 interacts with transmembrane channel-like proteins TMC1 and TMC2.</title>
        <authorList>
            <person name="Maeda R."/>
            <person name="Kindt K.S."/>
            <person name="Mo W."/>
            <person name="Morgan C.P."/>
            <person name="Erickson T."/>
            <person name="Zhao H."/>
            <person name="Clemens-Grisham R."/>
            <person name="Barr-Gillespie P.G."/>
            <person name="Nicolson T."/>
        </authorList>
    </citation>
    <scope>NUCLEOTIDE SEQUENCE [MRNA]</scope>
    <scope>TISSUE SPECIFICITY</scope>
    <scope>PHYLOGENETIC ANALYSIS</scope>
</reference>
<reference key="2">
    <citation type="journal article" date="2013" name="Nature">
        <title>The zebrafish reference genome sequence and its relationship to the human genome.</title>
        <authorList>
            <person name="Howe K."/>
            <person name="Clark M.D."/>
            <person name="Torroja C.F."/>
            <person name="Torrance J."/>
            <person name="Berthelot C."/>
            <person name="Muffato M."/>
            <person name="Collins J.E."/>
            <person name="Humphray S."/>
            <person name="McLaren K."/>
            <person name="Matthews L."/>
            <person name="McLaren S."/>
            <person name="Sealy I."/>
            <person name="Caccamo M."/>
            <person name="Churcher C."/>
            <person name="Scott C."/>
            <person name="Barrett J.C."/>
            <person name="Koch R."/>
            <person name="Rauch G.J."/>
            <person name="White S."/>
            <person name="Chow W."/>
            <person name="Kilian B."/>
            <person name="Quintais L.T."/>
            <person name="Guerra-Assuncao J.A."/>
            <person name="Zhou Y."/>
            <person name="Gu Y."/>
            <person name="Yen J."/>
            <person name="Vogel J.H."/>
            <person name="Eyre T."/>
            <person name="Redmond S."/>
            <person name="Banerjee R."/>
            <person name="Chi J."/>
            <person name="Fu B."/>
            <person name="Langley E."/>
            <person name="Maguire S.F."/>
            <person name="Laird G.K."/>
            <person name="Lloyd D."/>
            <person name="Kenyon E."/>
            <person name="Donaldson S."/>
            <person name="Sehra H."/>
            <person name="Almeida-King J."/>
            <person name="Loveland J."/>
            <person name="Trevanion S."/>
            <person name="Jones M."/>
            <person name="Quail M."/>
            <person name="Willey D."/>
            <person name="Hunt A."/>
            <person name="Burton J."/>
            <person name="Sims S."/>
            <person name="McLay K."/>
            <person name="Plumb B."/>
            <person name="Davis J."/>
            <person name="Clee C."/>
            <person name="Oliver K."/>
            <person name="Clark R."/>
            <person name="Riddle C."/>
            <person name="Elliot D."/>
            <person name="Threadgold G."/>
            <person name="Harden G."/>
            <person name="Ware D."/>
            <person name="Begum S."/>
            <person name="Mortimore B."/>
            <person name="Kerry G."/>
            <person name="Heath P."/>
            <person name="Phillimore B."/>
            <person name="Tracey A."/>
            <person name="Corby N."/>
            <person name="Dunn M."/>
            <person name="Johnson C."/>
            <person name="Wood J."/>
            <person name="Clark S."/>
            <person name="Pelan S."/>
            <person name="Griffiths G."/>
            <person name="Smith M."/>
            <person name="Glithero R."/>
            <person name="Howden P."/>
            <person name="Barker N."/>
            <person name="Lloyd C."/>
            <person name="Stevens C."/>
            <person name="Harley J."/>
            <person name="Holt K."/>
            <person name="Panagiotidis G."/>
            <person name="Lovell J."/>
            <person name="Beasley H."/>
            <person name="Henderson C."/>
            <person name="Gordon D."/>
            <person name="Auger K."/>
            <person name="Wright D."/>
            <person name="Collins J."/>
            <person name="Raisen C."/>
            <person name="Dyer L."/>
            <person name="Leung K."/>
            <person name="Robertson L."/>
            <person name="Ambridge K."/>
            <person name="Leongamornlert D."/>
            <person name="McGuire S."/>
            <person name="Gilderthorp R."/>
            <person name="Griffiths C."/>
            <person name="Manthravadi D."/>
            <person name="Nichol S."/>
            <person name="Barker G."/>
            <person name="Whitehead S."/>
            <person name="Kay M."/>
            <person name="Brown J."/>
            <person name="Murnane C."/>
            <person name="Gray E."/>
            <person name="Humphries M."/>
            <person name="Sycamore N."/>
            <person name="Barker D."/>
            <person name="Saunders D."/>
            <person name="Wallis J."/>
            <person name="Babbage A."/>
            <person name="Hammond S."/>
            <person name="Mashreghi-Mohammadi M."/>
            <person name="Barr L."/>
            <person name="Martin S."/>
            <person name="Wray P."/>
            <person name="Ellington A."/>
            <person name="Matthews N."/>
            <person name="Ellwood M."/>
            <person name="Woodmansey R."/>
            <person name="Clark G."/>
            <person name="Cooper J."/>
            <person name="Tromans A."/>
            <person name="Grafham D."/>
            <person name="Skuce C."/>
            <person name="Pandian R."/>
            <person name="Andrews R."/>
            <person name="Harrison E."/>
            <person name="Kimberley A."/>
            <person name="Garnett J."/>
            <person name="Fosker N."/>
            <person name="Hall R."/>
            <person name="Garner P."/>
            <person name="Kelly D."/>
            <person name="Bird C."/>
            <person name="Palmer S."/>
            <person name="Gehring I."/>
            <person name="Berger A."/>
            <person name="Dooley C.M."/>
            <person name="Ersan-Urun Z."/>
            <person name="Eser C."/>
            <person name="Geiger H."/>
            <person name="Geisler M."/>
            <person name="Karotki L."/>
            <person name="Kirn A."/>
            <person name="Konantz J."/>
            <person name="Konantz M."/>
            <person name="Oberlander M."/>
            <person name="Rudolph-Geiger S."/>
            <person name="Teucke M."/>
            <person name="Lanz C."/>
            <person name="Raddatz G."/>
            <person name="Osoegawa K."/>
            <person name="Zhu B."/>
            <person name="Rapp A."/>
            <person name="Widaa S."/>
            <person name="Langford C."/>
            <person name="Yang F."/>
            <person name="Schuster S.C."/>
            <person name="Carter N.P."/>
            <person name="Harrow J."/>
            <person name="Ning Z."/>
            <person name="Herrero J."/>
            <person name="Searle S.M."/>
            <person name="Enright A."/>
            <person name="Geisler R."/>
            <person name="Plasterk R.H."/>
            <person name="Lee C."/>
            <person name="Westerfield M."/>
            <person name="de Jong P.J."/>
            <person name="Zon L.I."/>
            <person name="Postlethwait J.H."/>
            <person name="Nusslein-Volhard C."/>
            <person name="Hubbard T.J."/>
            <person name="Roest Crollius H."/>
            <person name="Rogers J."/>
            <person name="Stemple D.L."/>
        </authorList>
    </citation>
    <scope>NUCLEOTIDE SEQUENCE [LARGE SCALE GENOMIC DNA]</scope>
    <source>
        <strain>Tuebingen</strain>
    </source>
</reference>
<reference key="3">
    <citation type="journal article" date="2017" name="Elife">
        <title>Integration of Tmc1/2 into the mechanotransduction complex in zebrafish hair cells is regulated by Transmembrane O-methyltransferase (Tomt).</title>
        <authorList>
            <person name="Erickson T."/>
            <person name="Morgan C.P."/>
            <person name="Olt J."/>
            <person name="Hardy K."/>
            <person name="Busch-Nentwich E."/>
            <person name="Maeda R."/>
            <person name="Clemens R."/>
            <person name="Krey J.F."/>
            <person name="Nechiporuk A."/>
            <person name="Barr-Gillespie P.G."/>
            <person name="Marcotti W."/>
            <person name="Nicolson T."/>
        </authorList>
    </citation>
    <scope>SUBCELLULAR LOCATION</scope>
</reference>